<organism>
    <name type="scientific">Tolumonas auensis (strain DSM 9187 / NBRC 110442 / TA 4)</name>
    <dbReference type="NCBI Taxonomy" id="595494"/>
    <lineage>
        <taxon>Bacteria</taxon>
        <taxon>Pseudomonadati</taxon>
        <taxon>Pseudomonadota</taxon>
        <taxon>Gammaproteobacteria</taxon>
        <taxon>Aeromonadales</taxon>
        <taxon>Aeromonadaceae</taxon>
        <taxon>Tolumonas</taxon>
    </lineage>
</organism>
<reference key="1">
    <citation type="submission" date="2009-05" db="EMBL/GenBank/DDBJ databases">
        <title>Complete sequence of Tolumonas auensis DSM 9187.</title>
        <authorList>
            <consortium name="US DOE Joint Genome Institute"/>
            <person name="Lucas S."/>
            <person name="Copeland A."/>
            <person name="Lapidus A."/>
            <person name="Glavina del Rio T."/>
            <person name="Tice H."/>
            <person name="Bruce D."/>
            <person name="Goodwin L."/>
            <person name="Pitluck S."/>
            <person name="Chertkov O."/>
            <person name="Brettin T."/>
            <person name="Detter J.C."/>
            <person name="Han C."/>
            <person name="Larimer F."/>
            <person name="Land M."/>
            <person name="Hauser L."/>
            <person name="Kyrpides N."/>
            <person name="Mikhailova N."/>
            <person name="Spring S."/>
            <person name="Beller H."/>
        </authorList>
    </citation>
    <scope>NUCLEOTIDE SEQUENCE [LARGE SCALE GENOMIC DNA]</scope>
    <source>
        <strain>DSM 9187 / NBRC 110442 / TA 4</strain>
    </source>
</reference>
<evidence type="ECO:0000255" key="1">
    <source>
        <dbReference type="HAMAP-Rule" id="MF_00008"/>
    </source>
</evidence>
<name>TYSY_TOLAT</name>
<sequence length="283" mass="32445">MKQYLDLCQRIIDEGVWIENQRTNKRCLTVINADLVYDVRNNQFPIITTRKSFWKAAIAELLGYIRGYDNAADFRALGTKSWDANANENEAWLKNPARKGLDDMGRVYGVQGRHWKTHDGTELDQLGKIVANLSKGIDDRGEILTFHNPGEFNLGCLRPCMHTHTFSLLGDTLYLTSYQRSCDVPLGLNFNQIQVFTLLALMAQITGNKPGLAYHKIVNAHIYEDQIELMRDVQLKRKPYPSPKLEINPDIKSLKDLETWVTLDDFNVTGYQHHDAIKYPFSV</sequence>
<gene>
    <name evidence="1" type="primary">thyA</name>
    <name type="ordered locus">Tola_2961</name>
</gene>
<feature type="chain" id="PRO_1000201726" description="Thymidylate synthase">
    <location>
        <begin position="1"/>
        <end position="283"/>
    </location>
</feature>
<feature type="active site" description="Nucleophile" evidence="1">
    <location>
        <position position="160"/>
    </location>
</feature>
<feature type="binding site" evidence="1">
    <location>
        <position position="22"/>
    </location>
    <ligand>
        <name>dUMP</name>
        <dbReference type="ChEBI" id="CHEBI:246422"/>
    </ligand>
</feature>
<feature type="binding site" evidence="1">
    <location>
        <begin position="180"/>
        <end position="183"/>
    </location>
    <ligand>
        <name>dUMP</name>
        <dbReference type="ChEBI" id="CHEBI:246422"/>
    </ligand>
</feature>
<feature type="binding site" evidence="1">
    <location>
        <position position="183"/>
    </location>
    <ligand>
        <name>(6R)-5,10-methylene-5,6,7,8-tetrahydrofolate</name>
        <dbReference type="ChEBI" id="CHEBI:15636"/>
    </ligand>
</feature>
<feature type="binding site" evidence="1">
    <location>
        <position position="191"/>
    </location>
    <ligand>
        <name>dUMP</name>
        <dbReference type="ChEBI" id="CHEBI:246422"/>
    </ligand>
</feature>
<feature type="binding site" evidence="1">
    <location>
        <begin position="221"/>
        <end position="223"/>
    </location>
    <ligand>
        <name>dUMP</name>
        <dbReference type="ChEBI" id="CHEBI:246422"/>
    </ligand>
</feature>
<feature type="binding site" evidence="1">
    <location>
        <position position="282"/>
    </location>
    <ligand>
        <name>(6R)-5,10-methylene-5,6,7,8-tetrahydrofolate</name>
        <dbReference type="ChEBI" id="CHEBI:15636"/>
    </ligand>
</feature>
<accession>C4LD19</accession>
<comment type="function">
    <text evidence="1">Catalyzes the reductive methylation of 2'-deoxyuridine-5'-monophosphate (dUMP) to 2'-deoxythymidine-5'-monophosphate (dTMP) while utilizing 5,10-methylenetetrahydrofolate (mTHF) as the methyl donor and reductant in the reaction, yielding dihydrofolate (DHF) as a by-product. This enzymatic reaction provides an intracellular de novo source of dTMP, an essential precursor for DNA biosynthesis.</text>
</comment>
<comment type="catalytic activity">
    <reaction evidence="1">
        <text>dUMP + (6R)-5,10-methylene-5,6,7,8-tetrahydrofolate = 7,8-dihydrofolate + dTMP</text>
        <dbReference type="Rhea" id="RHEA:12104"/>
        <dbReference type="ChEBI" id="CHEBI:15636"/>
        <dbReference type="ChEBI" id="CHEBI:57451"/>
        <dbReference type="ChEBI" id="CHEBI:63528"/>
        <dbReference type="ChEBI" id="CHEBI:246422"/>
        <dbReference type="EC" id="2.1.1.45"/>
    </reaction>
</comment>
<comment type="pathway">
    <text evidence="1">Pyrimidine metabolism; dTTP biosynthesis.</text>
</comment>
<comment type="subunit">
    <text evidence="1">Homodimer.</text>
</comment>
<comment type="subcellular location">
    <subcellularLocation>
        <location evidence="1">Cytoplasm</location>
    </subcellularLocation>
</comment>
<comment type="similarity">
    <text evidence="1">Belongs to the thymidylate synthase family. Bacterial-type ThyA subfamily.</text>
</comment>
<dbReference type="EC" id="2.1.1.45" evidence="1"/>
<dbReference type="EMBL" id="CP001616">
    <property type="protein sequence ID" value="ACQ94550.1"/>
    <property type="molecule type" value="Genomic_DNA"/>
</dbReference>
<dbReference type="RefSeq" id="WP_015879999.1">
    <property type="nucleotide sequence ID" value="NC_012691.1"/>
</dbReference>
<dbReference type="SMR" id="C4LD19"/>
<dbReference type="STRING" id="595494.Tola_2961"/>
<dbReference type="KEGG" id="tau:Tola_2961"/>
<dbReference type="eggNOG" id="COG0207">
    <property type="taxonomic scope" value="Bacteria"/>
</dbReference>
<dbReference type="HOGENOM" id="CLU_021669_0_1_6"/>
<dbReference type="OrthoDB" id="9774633at2"/>
<dbReference type="UniPathway" id="UPA00575"/>
<dbReference type="Proteomes" id="UP000009073">
    <property type="component" value="Chromosome"/>
</dbReference>
<dbReference type="GO" id="GO:0005829">
    <property type="term" value="C:cytosol"/>
    <property type="evidence" value="ECO:0007669"/>
    <property type="project" value="TreeGrafter"/>
</dbReference>
<dbReference type="GO" id="GO:0004799">
    <property type="term" value="F:thymidylate synthase activity"/>
    <property type="evidence" value="ECO:0007669"/>
    <property type="project" value="UniProtKB-UniRule"/>
</dbReference>
<dbReference type="GO" id="GO:0006231">
    <property type="term" value="P:dTMP biosynthetic process"/>
    <property type="evidence" value="ECO:0007669"/>
    <property type="project" value="UniProtKB-UniRule"/>
</dbReference>
<dbReference type="GO" id="GO:0006235">
    <property type="term" value="P:dTTP biosynthetic process"/>
    <property type="evidence" value="ECO:0007669"/>
    <property type="project" value="UniProtKB-UniRule"/>
</dbReference>
<dbReference type="GO" id="GO:0032259">
    <property type="term" value="P:methylation"/>
    <property type="evidence" value="ECO:0007669"/>
    <property type="project" value="UniProtKB-KW"/>
</dbReference>
<dbReference type="CDD" id="cd00351">
    <property type="entry name" value="TS_Pyrimidine_HMase"/>
    <property type="match status" value="1"/>
</dbReference>
<dbReference type="Gene3D" id="3.30.572.10">
    <property type="entry name" value="Thymidylate synthase/dCMP hydroxymethylase domain"/>
    <property type="match status" value="1"/>
</dbReference>
<dbReference type="HAMAP" id="MF_00008">
    <property type="entry name" value="Thymidy_synth_bact"/>
    <property type="match status" value="1"/>
</dbReference>
<dbReference type="InterPro" id="IPR045097">
    <property type="entry name" value="Thymidate_synth/dCMP_Mease"/>
</dbReference>
<dbReference type="InterPro" id="IPR023451">
    <property type="entry name" value="Thymidate_synth/dCMP_Mease_dom"/>
</dbReference>
<dbReference type="InterPro" id="IPR036926">
    <property type="entry name" value="Thymidate_synth/dCMP_Mease_sf"/>
</dbReference>
<dbReference type="InterPro" id="IPR000398">
    <property type="entry name" value="Thymidylate_synthase"/>
</dbReference>
<dbReference type="NCBIfam" id="NF002498">
    <property type="entry name" value="PRK01827.1-4"/>
    <property type="match status" value="1"/>
</dbReference>
<dbReference type="NCBIfam" id="TIGR03284">
    <property type="entry name" value="thym_sym"/>
    <property type="match status" value="1"/>
</dbReference>
<dbReference type="PANTHER" id="PTHR11548:SF9">
    <property type="entry name" value="THYMIDYLATE SYNTHASE"/>
    <property type="match status" value="1"/>
</dbReference>
<dbReference type="PANTHER" id="PTHR11548">
    <property type="entry name" value="THYMIDYLATE SYNTHASE 1"/>
    <property type="match status" value="1"/>
</dbReference>
<dbReference type="Pfam" id="PF00303">
    <property type="entry name" value="Thymidylat_synt"/>
    <property type="match status" value="1"/>
</dbReference>
<dbReference type="PRINTS" id="PR00108">
    <property type="entry name" value="THYMDSNTHASE"/>
</dbReference>
<dbReference type="SUPFAM" id="SSF55831">
    <property type="entry name" value="Thymidylate synthase/dCMP hydroxymethylase"/>
    <property type="match status" value="1"/>
</dbReference>
<protein>
    <recommendedName>
        <fullName evidence="1">Thymidylate synthase</fullName>
        <shortName evidence="1">TS</shortName>
        <shortName evidence="1">TSase</shortName>
        <ecNumber evidence="1">2.1.1.45</ecNumber>
    </recommendedName>
</protein>
<proteinExistence type="inferred from homology"/>
<keyword id="KW-0963">Cytoplasm</keyword>
<keyword id="KW-0489">Methyltransferase</keyword>
<keyword id="KW-0545">Nucleotide biosynthesis</keyword>
<keyword id="KW-1185">Reference proteome</keyword>
<keyword id="KW-0808">Transferase</keyword>